<name>C74M3_SELML</name>
<reference key="1">
    <citation type="journal article" date="2011" name="Science">
        <title>The Selaginella genome identifies genetic changes associated with the evolution of vascular plants.</title>
        <authorList>
            <person name="Banks J.A."/>
            <person name="Nishiyama T."/>
            <person name="Hasebe M."/>
            <person name="Bowman J.L."/>
            <person name="Gribskov M."/>
            <person name="dePamphilis C."/>
            <person name="Albert V.A."/>
            <person name="Aono N."/>
            <person name="Aoyama T."/>
            <person name="Ambrose B.A."/>
            <person name="Ashton N.W."/>
            <person name="Axtell M.J."/>
            <person name="Barker E."/>
            <person name="Barker M.S."/>
            <person name="Bennetzen J.L."/>
            <person name="Bonawitz N.D."/>
            <person name="Chapple C."/>
            <person name="Cheng C."/>
            <person name="Correa L.G."/>
            <person name="Dacre M."/>
            <person name="DeBarry J."/>
            <person name="Dreyer I."/>
            <person name="Elias M."/>
            <person name="Engstrom E.M."/>
            <person name="Estelle M."/>
            <person name="Feng L."/>
            <person name="Finet C."/>
            <person name="Floyd S.K."/>
            <person name="Frommer W.B."/>
            <person name="Fujita T."/>
            <person name="Gramzow L."/>
            <person name="Gutensohn M."/>
            <person name="Harholt J."/>
            <person name="Hattori M."/>
            <person name="Heyl A."/>
            <person name="Hirai T."/>
            <person name="Hiwatashi Y."/>
            <person name="Ishikawa M."/>
            <person name="Iwata M."/>
            <person name="Karol K.G."/>
            <person name="Koehler B."/>
            <person name="Kolukisaoglu U."/>
            <person name="Kubo M."/>
            <person name="Kurata T."/>
            <person name="Lalonde S."/>
            <person name="Li K."/>
            <person name="Li Y."/>
            <person name="Litt A."/>
            <person name="Lyons E."/>
            <person name="Manning G."/>
            <person name="Maruyama T."/>
            <person name="Michael T.P."/>
            <person name="Mikami K."/>
            <person name="Miyazaki S."/>
            <person name="Morinaga S."/>
            <person name="Murata T."/>
            <person name="Mueller-Roeber B."/>
            <person name="Nelson D.R."/>
            <person name="Obara M."/>
            <person name="Oguri Y."/>
            <person name="Olmstead R.G."/>
            <person name="Onodera N."/>
            <person name="Petersen B.L."/>
            <person name="Pils B."/>
            <person name="Prigge M."/>
            <person name="Rensing S.A."/>
            <person name="Riano-Pachon D.M."/>
            <person name="Roberts A.W."/>
            <person name="Sato Y."/>
            <person name="Scheller H.V."/>
            <person name="Schulz B."/>
            <person name="Schulz C."/>
            <person name="Shakirov E.V."/>
            <person name="Shibagaki N."/>
            <person name="Shinohara N."/>
            <person name="Shippen D.E."/>
            <person name="Soerensen I."/>
            <person name="Sotooka R."/>
            <person name="Sugimoto N."/>
            <person name="Sugita M."/>
            <person name="Sumikawa N."/>
            <person name="Tanurdzic M."/>
            <person name="Theissen G."/>
            <person name="Ulvskov P."/>
            <person name="Wakazuki S."/>
            <person name="Weng J.K."/>
            <person name="Willats W.W."/>
            <person name="Wipf D."/>
            <person name="Wolf P.G."/>
            <person name="Yang L."/>
            <person name="Zimmer A.D."/>
            <person name="Zhu Q."/>
            <person name="Mitros T."/>
            <person name="Hellsten U."/>
            <person name="Loque D."/>
            <person name="Otillar R."/>
            <person name="Salamov A."/>
            <person name="Schmutz J."/>
            <person name="Shapiro H."/>
            <person name="Lindquist E."/>
            <person name="Lucas S."/>
            <person name="Rokhsar D."/>
            <person name="Grigoriev I.V."/>
        </authorList>
    </citation>
    <scope>NUCLEOTIDE SEQUENCE [LARGE SCALE GENOMIC DNA]</scope>
</reference>
<reference key="2">
    <citation type="journal article" date="2016" name="Biochim. Biophys. Acta">
        <title>Oxylipin biosynthesis in spikemoss Selaginella moellendorffii: Molecular cloning and identification of divinyl ether synthases CYP74M1 and CYP74M3.</title>
        <authorList>
            <person name="Gorina S.S."/>
            <person name="Toporkova Y.Y."/>
            <person name="Mukhtarova L.S."/>
            <person name="Smirnova E.O."/>
            <person name="Chechetkin I.R."/>
            <person name="Khairutdinov B.I."/>
            <person name="Gogolev Y.V."/>
            <person name="Grechkin A.N."/>
        </authorList>
    </citation>
    <scope>FUNCTION</scope>
    <scope>CATALYTIC ACTIVITY</scope>
    <scope>BIOPHYSICOCHEMICAL PROPERTIES</scope>
    <scope>PATHWAY</scope>
</reference>
<sequence>MSKPAAAAPSDPSKPSKPLKEVPGSYGLPVLGAVKDRLDFYWFQGDTEFFRIRMEQHKSTVFRVNYSPGPPGYPDSRGIILLDQKSFSVLLDNSKVDKSDTLLGPYIPNLAFTGGYRVLPYLDTSEAKHTAYKDLIFELLHVNSSRIIPEYNKVFAETAGSWEERIAKSGKAEVFASSDSMITKFLLRTIVHKDPAEPGPASLGPKFRDTYQLWTGVNFAGIAHTPLPHFLEELLFHTFRLPPFLVKKQYKALANFYRTHATEVLDLAEKKYGLDREETVHQLILILGINARLGLHKMIPALIYYLGLLGEDFQAKIAAEVRSAVHKNRAQGEEGVNITTQALLEMPLLRSTVLETLRLTPSIFYIYGRAREDMVIESHDAAFQIKKGELLGGHQYFVMRDPEVFEEPHKFVADRFLGERGKAVLPYLVWSNGRETESPSSSNKQCPAKDVAELITMQFVAEMFLRYDSFEITKDSFINTTELNVHLKSLKKRSV</sequence>
<proteinExistence type="evidence at protein level"/>
<protein>
    <recommendedName>
        <fullName evidence="3">Divinyl ether synthase CYP74M3</fullName>
    </recommendedName>
    <alternativeName>
        <fullName evidence="5">Etheroleic acid synthase CYP74M3</fullName>
        <ecNumber evidence="2">4.2.1.183</ecNumber>
    </alternativeName>
</protein>
<accession>D8QZ31</accession>
<evidence type="ECO:0000250" key="1">
    <source>
        <dbReference type="UniProtKB" id="Q96242"/>
    </source>
</evidence>
<evidence type="ECO:0000269" key="2">
    <source>
    </source>
</evidence>
<evidence type="ECO:0000303" key="3">
    <source>
    </source>
</evidence>
<evidence type="ECO:0000305" key="4"/>
<evidence type="ECO:0000305" key="5">
    <source>
    </source>
</evidence>
<evidence type="ECO:0000312" key="6">
    <source>
        <dbReference type="EMBL" id="EFJ34345.1"/>
    </source>
</evidence>
<dbReference type="EC" id="4.2.1.183" evidence="2"/>
<dbReference type="EMBL" id="GL377569">
    <property type="protein sequence ID" value="EFJ34345.1"/>
    <property type="molecule type" value="Genomic_DNA"/>
</dbReference>
<dbReference type="RefSeq" id="XP_002964012.1">
    <property type="nucleotide sequence ID" value="XM_002963966.1"/>
</dbReference>
<dbReference type="STRING" id="88036.D8QZ31"/>
<dbReference type="EnsemblPlants" id="EFJ34345">
    <property type="protein sequence ID" value="EFJ34345"/>
    <property type="gene ID" value="SELMODRAFT_81998"/>
</dbReference>
<dbReference type="GeneID" id="9654395"/>
<dbReference type="Gramene" id="EFJ34345">
    <property type="protein sequence ID" value="EFJ34345"/>
    <property type="gene ID" value="SELMODRAFT_81998"/>
</dbReference>
<dbReference type="KEGG" id="smo:SELMODRAFT_81998"/>
<dbReference type="eggNOG" id="ENOG502QQNS">
    <property type="taxonomic scope" value="Eukaryota"/>
</dbReference>
<dbReference type="HOGENOM" id="CLU_045757_0_0_1"/>
<dbReference type="InParanoid" id="D8QZ31"/>
<dbReference type="OMA" id="PRHARIK"/>
<dbReference type="OrthoDB" id="447408at2759"/>
<dbReference type="BRENDA" id="4.2.1.B8">
    <property type="organism ID" value="9844"/>
</dbReference>
<dbReference type="UniPathway" id="UPA00382"/>
<dbReference type="Proteomes" id="UP000001514">
    <property type="component" value="Unassembled WGS sequence"/>
</dbReference>
<dbReference type="GO" id="GO:0020037">
    <property type="term" value="F:heme binding"/>
    <property type="evidence" value="ECO:0007669"/>
    <property type="project" value="InterPro"/>
</dbReference>
<dbReference type="GO" id="GO:0016836">
    <property type="term" value="F:hydro-lyase activity"/>
    <property type="evidence" value="ECO:0000314"/>
    <property type="project" value="UniProtKB"/>
</dbReference>
<dbReference type="GO" id="GO:0005506">
    <property type="term" value="F:iron ion binding"/>
    <property type="evidence" value="ECO:0007669"/>
    <property type="project" value="InterPro"/>
</dbReference>
<dbReference type="GO" id="GO:0004497">
    <property type="term" value="F:monooxygenase activity"/>
    <property type="evidence" value="ECO:0000318"/>
    <property type="project" value="GO_Central"/>
</dbReference>
<dbReference type="GO" id="GO:0016705">
    <property type="term" value="F:oxidoreductase activity, acting on paired donors, with incorporation or reduction of molecular oxygen"/>
    <property type="evidence" value="ECO:0007669"/>
    <property type="project" value="InterPro"/>
</dbReference>
<dbReference type="GO" id="GO:0006633">
    <property type="term" value="P:fatty acid biosynthetic process"/>
    <property type="evidence" value="ECO:0007669"/>
    <property type="project" value="UniProtKB-KW"/>
</dbReference>
<dbReference type="GO" id="GO:0031408">
    <property type="term" value="P:oxylipin biosynthetic process"/>
    <property type="evidence" value="ECO:0000314"/>
    <property type="project" value="UniProtKB"/>
</dbReference>
<dbReference type="CDD" id="cd11071">
    <property type="entry name" value="CYP74"/>
    <property type="match status" value="1"/>
</dbReference>
<dbReference type="FunFam" id="1.10.630.10:FF:000024">
    <property type="entry name" value="Allene oxide synthase, chloroplastic"/>
    <property type="match status" value="1"/>
</dbReference>
<dbReference type="Gene3D" id="1.10.630.10">
    <property type="entry name" value="Cytochrome P450"/>
    <property type="match status" value="1"/>
</dbReference>
<dbReference type="InterPro" id="IPR001128">
    <property type="entry name" value="Cyt_P450"/>
</dbReference>
<dbReference type="InterPro" id="IPR002403">
    <property type="entry name" value="Cyt_P450_E_grp-IV"/>
</dbReference>
<dbReference type="InterPro" id="IPR036396">
    <property type="entry name" value="Cyt_P450_sf"/>
</dbReference>
<dbReference type="PANTHER" id="PTHR24286:SF255">
    <property type="entry name" value="ALLENE OXIDE SYNTHASE, CHLOROPLASTIC"/>
    <property type="match status" value="1"/>
</dbReference>
<dbReference type="PANTHER" id="PTHR24286">
    <property type="entry name" value="CYTOCHROME P450 26"/>
    <property type="match status" value="1"/>
</dbReference>
<dbReference type="Pfam" id="PF00067">
    <property type="entry name" value="p450"/>
    <property type="match status" value="1"/>
</dbReference>
<dbReference type="PRINTS" id="PR00465">
    <property type="entry name" value="EP450IV"/>
</dbReference>
<dbReference type="SUPFAM" id="SSF48264">
    <property type="entry name" value="Cytochrome P450"/>
    <property type="match status" value="1"/>
</dbReference>
<feature type="chain" id="PRO_0000462249" description="Divinyl ether synthase CYP74M3">
    <location>
        <begin position="1"/>
        <end position="495"/>
    </location>
</feature>
<feature type="binding site" description="axial binding residue" evidence="1">
    <location>
        <position position="446"/>
    </location>
    <ligand>
        <name>heme</name>
        <dbReference type="ChEBI" id="CHEBI:30413"/>
    </ligand>
    <ligandPart>
        <name>Fe</name>
        <dbReference type="ChEBI" id="CHEBI:18248"/>
    </ligandPart>
</feature>
<comment type="function">
    <text evidence="2">Divinyl ether synthase involved in oxylipin biosynthesis (PubMed:26776054). Catalyzes the conversion of (13S)-hydroperoxy-(9Z,11E)-octadecadienoate (13-HPOD) to etheroleate and (13S)-hydroperoxy-(9Z,11E,15Z)-octadecatrienoate (13-HPOT) to etherolenate (PubMed:26776054). Has no activity with the corresponding 9-hydroperoxides (9-HPOD and 9-HPOT) (PubMed:26776054).</text>
</comment>
<comment type="catalytic activity">
    <reaction evidence="2">
        <text>(13S)-hydroperoxy-(9Z,11E)-octadecadienoate = etheroleate + H2O</text>
        <dbReference type="Rhea" id="RHEA:79275"/>
        <dbReference type="ChEBI" id="CHEBI:15377"/>
        <dbReference type="ChEBI" id="CHEBI:57466"/>
        <dbReference type="ChEBI" id="CHEBI:229759"/>
        <dbReference type="EC" id="4.2.1.183"/>
    </reaction>
    <physiologicalReaction direction="left-to-right" evidence="5">
        <dbReference type="Rhea" id="RHEA:79276"/>
    </physiologicalReaction>
</comment>
<comment type="catalytic activity">
    <reaction evidence="2">
        <text>(13S)-hydroperoxy-(9Z,11E,15Z)-octadecatrienoate = etherolenate + H2O</text>
        <dbReference type="Rhea" id="RHEA:79271"/>
        <dbReference type="ChEBI" id="CHEBI:15377"/>
        <dbReference type="ChEBI" id="CHEBI:58757"/>
        <dbReference type="ChEBI" id="CHEBI:229758"/>
        <dbReference type="EC" id="4.2.1.183"/>
    </reaction>
    <physiologicalReaction direction="left-to-right" evidence="5">
        <dbReference type="Rhea" id="RHEA:79272"/>
    </physiologicalReaction>
</comment>
<comment type="cofactor">
    <cofactor evidence="1">
        <name>heme</name>
        <dbReference type="ChEBI" id="CHEBI:30413"/>
    </cofactor>
</comment>
<comment type="biophysicochemical properties">
    <kinetics>
        <KM evidence="2">72.3 uM for (13S)-hydroperoxy-(9Z,11E)-octadecadienoate</KM>
        <KM evidence="2">89.3 uM for (13S)-hydroperoxy-(9Z,11E,15Z)-octadecatrienoate</KM>
        <text evidence="2">kcat is 193.5 sec(-1) with (13S)-hydroperoxy-(9Z,11E)-octadecadienoate as substrate (PubMed:26776054). kcat is 266.7 sec(-1) with (13S)-hydroperoxy-(9Z,11E,15Z)-octadecatrienoate as substrate (PubMed:26776054).</text>
    </kinetics>
</comment>
<comment type="pathway">
    <text evidence="2">Lipid metabolism; oxylipin biosynthesis.</text>
</comment>
<comment type="similarity">
    <text evidence="4">Belongs to the cytochrome P450 family.</text>
</comment>
<organism>
    <name type="scientific">Selaginella moellendorffii</name>
    <name type="common">Spikemoss</name>
    <dbReference type="NCBI Taxonomy" id="88036"/>
    <lineage>
        <taxon>Eukaryota</taxon>
        <taxon>Viridiplantae</taxon>
        <taxon>Streptophyta</taxon>
        <taxon>Embryophyta</taxon>
        <taxon>Tracheophyta</taxon>
        <taxon>Lycopodiopsida</taxon>
        <taxon>Selaginellales</taxon>
        <taxon>Selaginellaceae</taxon>
        <taxon>Selaginella</taxon>
    </lineage>
</organism>
<gene>
    <name evidence="3" type="primary">CYP74M3</name>
    <name evidence="3" type="synonym">DES2</name>
    <name evidence="6" type="ORF">SELMODRAFT_81998</name>
</gene>
<keyword id="KW-0275">Fatty acid biosynthesis</keyword>
<keyword id="KW-0276">Fatty acid metabolism</keyword>
<keyword id="KW-0349">Heme</keyword>
<keyword id="KW-0408">Iron</keyword>
<keyword id="KW-0444">Lipid biosynthesis</keyword>
<keyword id="KW-0443">Lipid metabolism</keyword>
<keyword id="KW-0456">Lyase</keyword>
<keyword id="KW-0479">Metal-binding</keyword>
<keyword id="KW-0925">Oxylipin biosynthesis</keyword>
<keyword id="KW-1185">Reference proteome</keyword>